<gene>
    <name evidence="1" type="primary">eno</name>
    <name type="ordered locus">Cvib_1615</name>
</gene>
<keyword id="KW-0963">Cytoplasm</keyword>
<keyword id="KW-0324">Glycolysis</keyword>
<keyword id="KW-0456">Lyase</keyword>
<keyword id="KW-0460">Magnesium</keyword>
<keyword id="KW-0479">Metal-binding</keyword>
<keyword id="KW-0964">Secreted</keyword>
<proteinExistence type="inferred from homology"/>
<protein>
    <recommendedName>
        <fullName evidence="1">Enolase</fullName>
        <ecNumber evidence="1">4.2.1.11</ecNumber>
    </recommendedName>
    <alternativeName>
        <fullName evidence="1">2-phospho-D-glycerate hydro-lyase</fullName>
    </alternativeName>
    <alternativeName>
        <fullName evidence="1">2-phosphoglycerate dehydratase</fullName>
    </alternativeName>
</protein>
<organism>
    <name type="scientific">Chlorobium phaeovibrioides (strain DSM 265 / 1930)</name>
    <name type="common">Prosthecochloris vibrioformis (strain DSM 265)</name>
    <dbReference type="NCBI Taxonomy" id="290318"/>
    <lineage>
        <taxon>Bacteria</taxon>
        <taxon>Pseudomonadati</taxon>
        <taxon>Chlorobiota</taxon>
        <taxon>Chlorobiia</taxon>
        <taxon>Chlorobiales</taxon>
        <taxon>Chlorobiaceae</taxon>
        <taxon>Chlorobium/Pelodictyon group</taxon>
        <taxon>Chlorobium</taxon>
    </lineage>
</organism>
<evidence type="ECO:0000255" key="1">
    <source>
        <dbReference type="HAMAP-Rule" id="MF_00318"/>
    </source>
</evidence>
<accession>A4SGL6</accession>
<reference key="1">
    <citation type="submission" date="2007-03" db="EMBL/GenBank/DDBJ databases">
        <title>Complete sequence of Prosthecochloris vibrioformis DSM 265.</title>
        <authorList>
            <consortium name="US DOE Joint Genome Institute"/>
            <person name="Copeland A."/>
            <person name="Lucas S."/>
            <person name="Lapidus A."/>
            <person name="Barry K."/>
            <person name="Detter J.C."/>
            <person name="Glavina del Rio T."/>
            <person name="Hammon N."/>
            <person name="Israni S."/>
            <person name="Pitluck S."/>
            <person name="Schmutz J."/>
            <person name="Larimer F."/>
            <person name="Land M."/>
            <person name="Hauser L."/>
            <person name="Mikhailova N."/>
            <person name="Li T."/>
            <person name="Overmann J."/>
            <person name="Schuster S.C."/>
            <person name="Bryant D.A."/>
            <person name="Richardson P."/>
        </authorList>
    </citation>
    <scope>NUCLEOTIDE SEQUENCE [LARGE SCALE GENOMIC DNA]</scope>
    <source>
        <strain>DSM 265 / 1930</strain>
    </source>
</reference>
<feature type="chain" id="PRO_1000079144" description="Enolase">
    <location>
        <begin position="1"/>
        <end position="437"/>
    </location>
</feature>
<feature type="active site" description="Proton donor" evidence="1">
    <location>
        <position position="204"/>
    </location>
</feature>
<feature type="active site" description="Proton acceptor" evidence="1">
    <location>
        <position position="349"/>
    </location>
</feature>
<feature type="binding site" evidence="1">
    <location>
        <position position="162"/>
    </location>
    <ligand>
        <name>(2R)-2-phosphoglycerate</name>
        <dbReference type="ChEBI" id="CHEBI:58289"/>
    </ligand>
</feature>
<feature type="binding site" evidence="1">
    <location>
        <position position="251"/>
    </location>
    <ligand>
        <name>Mg(2+)</name>
        <dbReference type="ChEBI" id="CHEBI:18420"/>
    </ligand>
</feature>
<feature type="binding site" evidence="1">
    <location>
        <position position="297"/>
    </location>
    <ligand>
        <name>Mg(2+)</name>
        <dbReference type="ChEBI" id="CHEBI:18420"/>
    </ligand>
</feature>
<feature type="binding site" evidence="1">
    <location>
        <position position="324"/>
    </location>
    <ligand>
        <name>Mg(2+)</name>
        <dbReference type="ChEBI" id="CHEBI:18420"/>
    </ligand>
</feature>
<feature type="binding site" evidence="1">
    <location>
        <position position="349"/>
    </location>
    <ligand>
        <name>(2R)-2-phosphoglycerate</name>
        <dbReference type="ChEBI" id="CHEBI:58289"/>
    </ligand>
</feature>
<feature type="binding site" evidence="1">
    <location>
        <position position="378"/>
    </location>
    <ligand>
        <name>(2R)-2-phosphoglycerate</name>
        <dbReference type="ChEBI" id="CHEBI:58289"/>
    </ligand>
</feature>
<feature type="binding site" evidence="1">
    <location>
        <position position="379"/>
    </location>
    <ligand>
        <name>(2R)-2-phosphoglycerate</name>
        <dbReference type="ChEBI" id="CHEBI:58289"/>
    </ligand>
</feature>
<feature type="binding site" evidence="1">
    <location>
        <position position="400"/>
    </location>
    <ligand>
        <name>(2R)-2-phosphoglycerate</name>
        <dbReference type="ChEBI" id="CHEBI:58289"/>
    </ligand>
</feature>
<dbReference type="EC" id="4.2.1.11" evidence="1"/>
<dbReference type="EMBL" id="CP000607">
    <property type="protein sequence ID" value="ABP37625.1"/>
    <property type="molecule type" value="Genomic_DNA"/>
</dbReference>
<dbReference type="SMR" id="A4SGL6"/>
<dbReference type="STRING" id="290318.Cvib_1615"/>
<dbReference type="KEGG" id="pvi:Cvib_1615"/>
<dbReference type="eggNOG" id="COG0148">
    <property type="taxonomic scope" value="Bacteria"/>
</dbReference>
<dbReference type="HOGENOM" id="CLU_031223_2_1_10"/>
<dbReference type="OrthoDB" id="9804716at2"/>
<dbReference type="UniPathway" id="UPA00109">
    <property type="reaction ID" value="UER00187"/>
</dbReference>
<dbReference type="GO" id="GO:0009986">
    <property type="term" value="C:cell surface"/>
    <property type="evidence" value="ECO:0007669"/>
    <property type="project" value="UniProtKB-SubCell"/>
</dbReference>
<dbReference type="GO" id="GO:0005576">
    <property type="term" value="C:extracellular region"/>
    <property type="evidence" value="ECO:0007669"/>
    <property type="project" value="UniProtKB-SubCell"/>
</dbReference>
<dbReference type="GO" id="GO:0000015">
    <property type="term" value="C:phosphopyruvate hydratase complex"/>
    <property type="evidence" value="ECO:0007669"/>
    <property type="project" value="InterPro"/>
</dbReference>
<dbReference type="GO" id="GO:0000287">
    <property type="term" value="F:magnesium ion binding"/>
    <property type="evidence" value="ECO:0007669"/>
    <property type="project" value="UniProtKB-UniRule"/>
</dbReference>
<dbReference type="GO" id="GO:0004634">
    <property type="term" value="F:phosphopyruvate hydratase activity"/>
    <property type="evidence" value="ECO:0007669"/>
    <property type="project" value="UniProtKB-UniRule"/>
</dbReference>
<dbReference type="GO" id="GO:0006096">
    <property type="term" value="P:glycolytic process"/>
    <property type="evidence" value="ECO:0007669"/>
    <property type="project" value="UniProtKB-UniRule"/>
</dbReference>
<dbReference type="CDD" id="cd03313">
    <property type="entry name" value="enolase"/>
    <property type="match status" value="1"/>
</dbReference>
<dbReference type="FunFam" id="3.20.20.120:FF:000001">
    <property type="entry name" value="Enolase"/>
    <property type="match status" value="1"/>
</dbReference>
<dbReference type="FunFam" id="3.30.390.10:FF:000001">
    <property type="entry name" value="Enolase"/>
    <property type="match status" value="1"/>
</dbReference>
<dbReference type="Gene3D" id="3.20.20.120">
    <property type="entry name" value="Enolase-like C-terminal domain"/>
    <property type="match status" value="1"/>
</dbReference>
<dbReference type="Gene3D" id="3.30.390.10">
    <property type="entry name" value="Enolase-like, N-terminal domain"/>
    <property type="match status" value="1"/>
</dbReference>
<dbReference type="HAMAP" id="MF_00318">
    <property type="entry name" value="Enolase"/>
    <property type="match status" value="1"/>
</dbReference>
<dbReference type="InterPro" id="IPR000941">
    <property type="entry name" value="Enolase"/>
</dbReference>
<dbReference type="InterPro" id="IPR036849">
    <property type="entry name" value="Enolase-like_C_sf"/>
</dbReference>
<dbReference type="InterPro" id="IPR029017">
    <property type="entry name" value="Enolase-like_N"/>
</dbReference>
<dbReference type="InterPro" id="IPR020810">
    <property type="entry name" value="Enolase_C"/>
</dbReference>
<dbReference type="InterPro" id="IPR020809">
    <property type="entry name" value="Enolase_CS"/>
</dbReference>
<dbReference type="InterPro" id="IPR020811">
    <property type="entry name" value="Enolase_N"/>
</dbReference>
<dbReference type="NCBIfam" id="TIGR01060">
    <property type="entry name" value="eno"/>
    <property type="match status" value="1"/>
</dbReference>
<dbReference type="PANTHER" id="PTHR11902">
    <property type="entry name" value="ENOLASE"/>
    <property type="match status" value="1"/>
</dbReference>
<dbReference type="PANTHER" id="PTHR11902:SF1">
    <property type="entry name" value="ENOLASE"/>
    <property type="match status" value="1"/>
</dbReference>
<dbReference type="Pfam" id="PF00113">
    <property type="entry name" value="Enolase_C"/>
    <property type="match status" value="1"/>
</dbReference>
<dbReference type="Pfam" id="PF03952">
    <property type="entry name" value="Enolase_N"/>
    <property type="match status" value="1"/>
</dbReference>
<dbReference type="PIRSF" id="PIRSF001400">
    <property type="entry name" value="Enolase"/>
    <property type="match status" value="1"/>
</dbReference>
<dbReference type="PRINTS" id="PR00148">
    <property type="entry name" value="ENOLASE"/>
</dbReference>
<dbReference type="SFLD" id="SFLDF00002">
    <property type="entry name" value="enolase"/>
    <property type="match status" value="1"/>
</dbReference>
<dbReference type="SFLD" id="SFLDG00178">
    <property type="entry name" value="enolase"/>
    <property type="match status" value="1"/>
</dbReference>
<dbReference type="SMART" id="SM01192">
    <property type="entry name" value="Enolase_C"/>
    <property type="match status" value="1"/>
</dbReference>
<dbReference type="SMART" id="SM01193">
    <property type="entry name" value="Enolase_N"/>
    <property type="match status" value="1"/>
</dbReference>
<dbReference type="SUPFAM" id="SSF51604">
    <property type="entry name" value="Enolase C-terminal domain-like"/>
    <property type="match status" value="1"/>
</dbReference>
<dbReference type="SUPFAM" id="SSF54826">
    <property type="entry name" value="Enolase N-terminal domain-like"/>
    <property type="match status" value="1"/>
</dbReference>
<dbReference type="PROSITE" id="PS00164">
    <property type="entry name" value="ENOLASE"/>
    <property type="match status" value="1"/>
</dbReference>
<sequence>MPIIRKIHARQILDSRGNPTVEVDVYTESSFGRAAVPSGASTGVHEAVELRDGDASVYLGKGVLKAVENVNTIVDEGLRGMLVTEQEEIDRMLLELDGTPNKSKLGANALLGVSLACAKAGAEYSGMSLYRYIGGTMANTLPVPMMNVINGGAHADNTVDFQEFMIMPIGFTSYSDALRCGAEIFHALKALLKSRGLSTAVGDEGGFAPNLTSNEEAIELVVEAIGKAGYKAGSPASKGGLGEGQVMIALDPASSEFYDADKKKYVFKKSDKRELSSEEMAAYWEKWSNDYPIISIEDGMAEDDWAGWKMLTDRIGSRVQLVGDDLFVTNSVRLAEGIEKKVGNSILVKVNQIGTLTETLEAIDLAKRNGYTAVISHRSGETEDSTIAQIAVATNAGQIKTGSMSRSDRMAKYNELLRIEEELGAQAVYPAAKAFRV</sequence>
<comment type="function">
    <text evidence="1">Catalyzes the reversible conversion of 2-phosphoglycerate (2-PG) into phosphoenolpyruvate (PEP). It is essential for the degradation of carbohydrates via glycolysis.</text>
</comment>
<comment type="catalytic activity">
    <reaction evidence="1">
        <text>(2R)-2-phosphoglycerate = phosphoenolpyruvate + H2O</text>
        <dbReference type="Rhea" id="RHEA:10164"/>
        <dbReference type="ChEBI" id="CHEBI:15377"/>
        <dbReference type="ChEBI" id="CHEBI:58289"/>
        <dbReference type="ChEBI" id="CHEBI:58702"/>
        <dbReference type="EC" id="4.2.1.11"/>
    </reaction>
</comment>
<comment type="cofactor">
    <cofactor evidence="1">
        <name>Mg(2+)</name>
        <dbReference type="ChEBI" id="CHEBI:18420"/>
    </cofactor>
    <text evidence="1">Binds a second Mg(2+) ion via substrate during catalysis.</text>
</comment>
<comment type="pathway">
    <text evidence="1">Carbohydrate degradation; glycolysis; pyruvate from D-glyceraldehyde 3-phosphate: step 4/5.</text>
</comment>
<comment type="subcellular location">
    <subcellularLocation>
        <location evidence="1">Cytoplasm</location>
    </subcellularLocation>
    <subcellularLocation>
        <location evidence="1">Secreted</location>
    </subcellularLocation>
    <subcellularLocation>
        <location evidence="1">Cell surface</location>
    </subcellularLocation>
    <text evidence="1">Fractions of enolase are present in both the cytoplasm and on the cell surface.</text>
</comment>
<comment type="similarity">
    <text evidence="1">Belongs to the enolase family.</text>
</comment>
<name>ENO_CHLPM</name>